<feature type="chain" id="PRO_1000061849" description="Ribosomal RNA large subunit methyltransferase H">
    <location>
        <begin position="1"/>
        <end position="159"/>
    </location>
</feature>
<feature type="binding site" evidence="1">
    <location>
        <position position="76"/>
    </location>
    <ligand>
        <name>S-adenosyl-L-methionine</name>
        <dbReference type="ChEBI" id="CHEBI:59789"/>
    </ligand>
</feature>
<feature type="binding site" evidence="1">
    <location>
        <position position="108"/>
    </location>
    <ligand>
        <name>S-adenosyl-L-methionine</name>
        <dbReference type="ChEBI" id="CHEBI:59789"/>
    </ligand>
</feature>
<feature type="binding site" evidence="1">
    <location>
        <begin position="127"/>
        <end position="132"/>
    </location>
    <ligand>
        <name>S-adenosyl-L-methionine</name>
        <dbReference type="ChEBI" id="CHEBI:59789"/>
    </ligand>
</feature>
<organism>
    <name type="scientific">Streptococcus sanguinis (strain SK36)</name>
    <dbReference type="NCBI Taxonomy" id="388919"/>
    <lineage>
        <taxon>Bacteria</taxon>
        <taxon>Bacillati</taxon>
        <taxon>Bacillota</taxon>
        <taxon>Bacilli</taxon>
        <taxon>Lactobacillales</taxon>
        <taxon>Streptococcaceae</taxon>
        <taxon>Streptococcus</taxon>
    </lineage>
</organism>
<dbReference type="EC" id="2.1.1.177" evidence="1"/>
<dbReference type="EMBL" id="CP000387">
    <property type="protein sequence ID" value="ABN45738.1"/>
    <property type="molecule type" value="Genomic_DNA"/>
</dbReference>
<dbReference type="RefSeq" id="WP_011837730.1">
    <property type="nucleotide sequence ID" value="NC_009009.1"/>
</dbReference>
<dbReference type="RefSeq" id="YP_001036288.1">
    <property type="nucleotide sequence ID" value="NC_009009.1"/>
</dbReference>
<dbReference type="SMR" id="A3CRD3"/>
<dbReference type="STRING" id="388919.SSA_2380"/>
<dbReference type="KEGG" id="ssa:SSA_2380"/>
<dbReference type="PATRIC" id="fig|388919.9.peg.2261"/>
<dbReference type="eggNOG" id="COG1576">
    <property type="taxonomic scope" value="Bacteria"/>
</dbReference>
<dbReference type="HOGENOM" id="CLU_100552_0_0_9"/>
<dbReference type="OrthoDB" id="9806643at2"/>
<dbReference type="Proteomes" id="UP000002148">
    <property type="component" value="Chromosome"/>
</dbReference>
<dbReference type="GO" id="GO:0005737">
    <property type="term" value="C:cytoplasm"/>
    <property type="evidence" value="ECO:0007669"/>
    <property type="project" value="UniProtKB-SubCell"/>
</dbReference>
<dbReference type="GO" id="GO:0070038">
    <property type="term" value="F:rRNA (pseudouridine-N3-)-methyltransferase activity"/>
    <property type="evidence" value="ECO:0007669"/>
    <property type="project" value="UniProtKB-UniRule"/>
</dbReference>
<dbReference type="CDD" id="cd18081">
    <property type="entry name" value="RlmH-like"/>
    <property type="match status" value="1"/>
</dbReference>
<dbReference type="Gene3D" id="3.40.1280.10">
    <property type="match status" value="1"/>
</dbReference>
<dbReference type="HAMAP" id="MF_00658">
    <property type="entry name" value="23SrRNA_methyltr_H"/>
    <property type="match status" value="1"/>
</dbReference>
<dbReference type="InterPro" id="IPR029028">
    <property type="entry name" value="Alpha/beta_knot_MTases"/>
</dbReference>
<dbReference type="InterPro" id="IPR003742">
    <property type="entry name" value="RlmH-like"/>
</dbReference>
<dbReference type="InterPro" id="IPR029026">
    <property type="entry name" value="tRNA_m1G_MTases_N"/>
</dbReference>
<dbReference type="NCBIfam" id="NF000985">
    <property type="entry name" value="PRK00103.1-3"/>
    <property type="match status" value="1"/>
</dbReference>
<dbReference type="NCBIfam" id="TIGR00246">
    <property type="entry name" value="tRNA_RlmH_YbeA"/>
    <property type="match status" value="1"/>
</dbReference>
<dbReference type="PANTHER" id="PTHR33603">
    <property type="entry name" value="METHYLTRANSFERASE"/>
    <property type="match status" value="1"/>
</dbReference>
<dbReference type="PANTHER" id="PTHR33603:SF1">
    <property type="entry name" value="RIBOSOMAL RNA LARGE SUBUNIT METHYLTRANSFERASE H"/>
    <property type="match status" value="1"/>
</dbReference>
<dbReference type="Pfam" id="PF02590">
    <property type="entry name" value="SPOUT_MTase"/>
    <property type="match status" value="1"/>
</dbReference>
<dbReference type="PIRSF" id="PIRSF004505">
    <property type="entry name" value="MT_bac"/>
    <property type="match status" value="1"/>
</dbReference>
<dbReference type="SUPFAM" id="SSF75217">
    <property type="entry name" value="alpha/beta knot"/>
    <property type="match status" value="1"/>
</dbReference>
<comment type="function">
    <text evidence="1">Specifically methylates the pseudouridine at position 1915 (m3Psi1915) in 23S rRNA.</text>
</comment>
<comment type="catalytic activity">
    <reaction evidence="1">
        <text>pseudouridine(1915) in 23S rRNA + S-adenosyl-L-methionine = N(3)-methylpseudouridine(1915) in 23S rRNA + S-adenosyl-L-homocysteine + H(+)</text>
        <dbReference type="Rhea" id="RHEA:42752"/>
        <dbReference type="Rhea" id="RHEA-COMP:10221"/>
        <dbReference type="Rhea" id="RHEA-COMP:10222"/>
        <dbReference type="ChEBI" id="CHEBI:15378"/>
        <dbReference type="ChEBI" id="CHEBI:57856"/>
        <dbReference type="ChEBI" id="CHEBI:59789"/>
        <dbReference type="ChEBI" id="CHEBI:65314"/>
        <dbReference type="ChEBI" id="CHEBI:74486"/>
        <dbReference type="EC" id="2.1.1.177"/>
    </reaction>
</comment>
<comment type="subunit">
    <text evidence="1">Homodimer.</text>
</comment>
<comment type="subcellular location">
    <subcellularLocation>
        <location evidence="1">Cytoplasm</location>
    </subcellularLocation>
</comment>
<comment type="similarity">
    <text evidence="1">Belongs to the RNA methyltransferase RlmH family.</text>
</comment>
<gene>
    <name evidence="1" type="primary">rlmH</name>
    <name type="ordered locus">SSA_2380</name>
</gene>
<keyword id="KW-0963">Cytoplasm</keyword>
<keyword id="KW-0489">Methyltransferase</keyword>
<keyword id="KW-1185">Reference proteome</keyword>
<keyword id="KW-0698">rRNA processing</keyword>
<keyword id="KW-0949">S-adenosyl-L-methionine</keyword>
<keyword id="KW-0808">Transferase</keyword>
<name>RLMH_STRSV</name>
<sequence length="159" mass="18224">MKIKLVTVGKLKEKYLKDGIAEYMKRLNRFCKVEMIELANEKTPDKASDLENQQILEKEGNKILAKINEREFVIALAIEGNQFPSEKFSQLMMDTTVHGFSDITFVIGGSLGLYPAVKKRANLLMSFGKLTLPHQLMRLVLIEQIYRAFMIQQGSPYHK</sequence>
<evidence type="ECO:0000255" key="1">
    <source>
        <dbReference type="HAMAP-Rule" id="MF_00658"/>
    </source>
</evidence>
<reference key="1">
    <citation type="journal article" date="2007" name="J. Bacteriol.">
        <title>Genome of the opportunistic pathogen Streptococcus sanguinis.</title>
        <authorList>
            <person name="Xu P."/>
            <person name="Alves J.M."/>
            <person name="Kitten T."/>
            <person name="Brown A."/>
            <person name="Chen Z."/>
            <person name="Ozaki L.S."/>
            <person name="Manque P."/>
            <person name="Ge X."/>
            <person name="Serrano M.G."/>
            <person name="Puiu D."/>
            <person name="Hendricks S."/>
            <person name="Wang Y."/>
            <person name="Chaplin M.D."/>
            <person name="Akan D."/>
            <person name="Paik S."/>
            <person name="Peterson D.L."/>
            <person name="Macrina F.L."/>
            <person name="Buck G.A."/>
        </authorList>
    </citation>
    <scope>NUCLEOTIDE SEQUENCE [LARGE SCALE GENOMIC DNA]</scope>
    <source>
        <strain>SK36</strain>
    </source>
</reference>
<proteinExistence type="inferred from homology"/>
<accession>A3CRD3</accession>
<protein>
    <recommendedName>
        <fullName evidence="1">Ribosomal RNA large subunit methyltransferase H</fullName>
        <ecNumber evidence="1">2.1.1.177</ecNumber>
    </recommendedName>
    <alternativeName>
        <fullName evidence="1">23S rRNA (pseudouridine1915-N3)-methyltransferase</fullName>
    </alternativeName>
    <alternativeName>
        <fullName evidence="1">23S rRNA m3Psi1915 methyltransferase</fullName>
    </alternativeName>
    <alternativeName>
        <fullName evidence="1">rRNA (pseudouridine-N3-)-methyltransferase RlmH</fullName>
    </alternativeName>
</protein>